<organism>
    <name type="scientific">Vibrio cholerae serotype O1 (strain ATCC 39315 / El Tor Inaba N16961)</name>
    <dbReference type="NCBI Taxonomy" id="243277"/>
    <lineage>
        <taxon>Bacteria</taxon>
        <taxon>Pseudomonadati</taxon>
        <taxon>Pseudomonadota</taxon>
        <taxon>Gammaproteobacteria</taxon>
        <taxon>Vibrionales</taxon>
        <taxon>Vibrionaceae</taxon>
        <taxon>Vibrio</taxon>
    </lineage>
</organism>
<protein>
    <recommendedName>
        <fullName evidence="1">UPF0181 protein VC_A0569</fullName>
    </recommendedName>
</protein>
<gene>
    <name type="ordered locus">VC_A0569</name>
</gene>
<comment type="similarity">
    <text evidence="1">Belongs to the UPF0181 family.</text>
</comment>
<keyword id="KW-1185">Reference proteome</keyword>
<sequence length="53" mass="5890">MFDDLPTLTHAEQQVAVEKIQKLMAEGISTGEAIKIVAQQIREDKKAQNQGTH</sequence>
<feature type="chain" id="PRO_0000216203" description="UPF0181 protein VC_A0569">
    <location>
        <begin position="1"/>
        <end position="53"/>
    </location>
</feature>
<evidence type="ECO:0000255" key="1">
    <source>
        <dbReference type="HAMAP-Rule" id="MF_00507"/>
    </source>
</evidence>
<name>Y3369_VIBCH</name>
<dbReference type="EMBL" id="AE003853">
    <property type="protein sequence ID" value="AAF96471.1"/>
    <property type="molecule type" value="Genomic_DNA"/>
</dbReference>
<dbReference type="PIR" id="B82445">
    <property type="entry name" value="B82445"/>
</dbReference>
<dbReference type="RefSeq" id="NP_232959.1">
    <property type="nucleotide sequence ID" value="NC_002506.1"/>
</dbReference>
<dbReference type="RefSeq" id="WP_000459082.1">
    <property type="nucleotide sequence ID" value="NZ_LT906615.1"/>
</dbReference>
<dbReference type="SMR" id="Q9KM20"/>
<dbReference type="STRING" id="243277.VC_A0569"/>
<dbReference type="DNASU" id="2612535"/>
<dbReference type="EnsemblBacteria" id="AAF96471">
    <property type="protein sequence ID" value="AAF96471"/>
    <property type="gene ID" value="VC_A0569"/>
</dbReference>
<dbReference type="KEGG" id="vch:VC_A0569"/>
<dbReference type="PATRIC" id="fig|243277.26.peg.3196"/>
<dbReference type="eggNOG" id="COG3140">
    <property type="taxonomic scope" value="Bacteria"/>
</dbReference>
<dbReference type="HOGENOM" id="CLU_185263_1_0_6"/>
<dbReference type="Proteomes" id="UP000000584">
    <property type="component" value="Chromosome 2"/>
</dbReference>
<dbReference type="HAMAP" id="MF_00507">
    <property type="entry name" value="UPF0181"/>
    <property type="match status" value="1"/>
</dbReference>
<dbReference type="InterPro" id="IPR005371">
    <property type="entry name" value="UPF0181"/>
</dbReference>
<dbReference type="NCBIfam" id="NF003476">
    <property type="entry name" value="PRK05114.1"/>
    <property type="match status" value="1"/>
</dbReference>
<dbReference type="Pfam" id="PF03701">
    <property type="entry name" value="UPF0181"/>
    <property type="match status" value="1"/>
</dbReference>
<proteinExistence type="inferred from homology"/>
<reference key="1">
    <citation type="journal article" date="2000" name="Nature">
        <title>DNA sequence of both chromosomes of the cholera pathogen Vibrio cholerae.</title>
        <authorList>
            <person name="Heidelberg J.F."/>
            <person name="Eisen J.A."/>
            <person name="Nelson W.C."/>
            <person name="Clayton R.A."/>
            <person name="Gwinn M.L."/>
            <person name="Dodson R.J."/>
            <person name="Haft D.H."/>
            <person name="Hickey E.K."/>
            <person name="Peterson J.D."/>
            <person name="Umayam L.A."/>
            <person name="Gill S.R."/>
            <person name="Nelson K.E."/>
            <person name="Read T.D."/>
            <person name="Tettelin H."/>
            <person name="Richardson D.L."/>
            <person name="Ermolaeva M.D."/>
            <person name="Vamathevan J.J."/>
            <person name="Bass S."/>
            <person name="Qin H."/>
            <person name="Dragoi I."/>
            <person name="Sellers P."/>
            <person name="McDonald L.A."/>
            <person name="Utterback T.R."/>
            <person name="Fleischmann R.D."/>
            <person name="Nierman W.C."/>
            <person name="White O."/>
            <person name="Salzberg S.L."/>
            <person name="Smith H.O."/>
            <person name="Colwell R.R."/>
            <person name="Mekalanos J.J."/>
            <person name="Venter J.C."/>
            <person name="Fraser C.M."/>
        </authorList>
    </citation>
    <scope>NUCLEOTIDE SEQUENCE [LARGE SCALE GENOMIC DNA]</scope>
    <source>
        <strain>ATCC 39315 / El Tor Inaba N16961</strain>
    </source>
</reference>
<accession>Q9KM20</accession>